<keyword id="KW-0106">Calcium</keyword>
<keyword id="KW-1015">Disulfide bond</keyword>
<keyword id="KW-0326">Glycosidase</keyword>
<keyword id="KW-0378">Hydrolase</keyword>
<keyword id="KW-0479">Metal-binding</keyword>
<keyword id="KW-0732">Signal</keyword>
<evidence type="ECO:0000250" key="1"/>
<evidence type="ECO:0000255" key="2"/>
<evidence type="ECO:0000305" key="3"/>
<protein>
    <recommendedName>
        <fullName>Isoamylase</fullName>
        <ecNumber>3.2.1.68</ecNumber>
    </recommendedName>
</protein>
<accession>O32611</accession>
<comment type="function">
    <text>Has a high rate of hydrolysis for glycogen. Does not cleave pullulan.</text>
</comment>
<comment type="catalytic activity">
    <reaction>
        <text>Hydrolysis of (1-&gt;6)-alpha-D-glucosidic branch linkages in glycogen, amylopectin and their beta-limit dextrins.</text>
        <dbReference type="EC" id="3.2.1.68"/>
    </reaction>
</comment>
<comment type="cofactor">
    <cofactor evidence="1">
        <name>Ca(2+)</name>
        <dbReference type="ChEBI" id="CHEBI:29108"/>
    </cofactor>
    <text evidence="1">Binds 1 Ca(2+) ion per subunit.</text>
</comment>
<comment type="biophysicochemical properties">
    <phDependence>
        <text>Optimum pH is 6-7.</text>
    </phDependence>
</comment>
<comment type="subunit">
    <text evidence="1">Monomer.</text>
</comment>
<comment type="similarity">
    <text evidence="3">Belongs to the glycosyl hydrolase 13 family.</text>
</comment>
<feature type="signal peptide" evidence="2">
    <location>
        <begin position="1"/>
        <end position="32"/>
    </location>
</feature>
<feature type="chain" id="PRO_0000001423" description="Isoamylase">
    <location>
        <begin position="33"/>
        <end position="777"/>
    </location>
</feature>
<feature type="active site" description="Nucleophile" evidence="1">
    <location>
        <position position="410"/>
    </location>
</feature>
<feature type="active site" description="Proton donor" evidence="1">
    <location>
        <position position="458"/>
    </location>
</feature>
<feature type="binding site" evidence="1">
    <location>
        <position position="162"/>
    </location>
    <ligand>
        <name>Ca(2+)</name>
        <dbReference type="ChEBI" id="CHEBI:29108"/>
    </ligand>
</feature>
<feature type="binding site" evidence="1">
    <location>
        <position position="263"/>
    </location>
    <ligand>
        <name>Ca(2+)</name>
        <dbReference type="ChEBI" id="CHEBI:29108"/>
    </ligand>
</feature>
<feature type="binding site" evidence="1">
    <location>
        <position position="264"/>
    </location>
    <ligand>
        <name>Ca(2+)</name>
        <dbReference type="ChEBI" id="CHEBI:29108"/>
    </ligand>
</feature>
<feature type="binding site" evidence="1">
    <location>
        <position position="266"/>
    </location>
    <ligand>
        <name>Ca(2+)</name>
        <dbReference type="ChEBI" id="CHEBI:29108"/>
    </ligand>
</feature>
<feature type="binding site" evidence="1">
    <location>
        <position position="293"/>
    </location>
    <ligand>
        <name>Ca(2+)</name>
        <dbReference type="ChEBI" id="CHEBI:29108"/>
    </ligand>
</feature>
<feature type="site" description="Transition state stabilizer" evidence="1">
    <location>
        <position position="533"/>
    </location>
</feature>
<feature type="disulfide bond" evidence="1">
    <location>
        <begin position="419"/>
        <end position="423"/>
    </location>
</feature>
<name>ISOA_FLASP</name>
<reference key="1">
    <citation type="journal article" date="1997" name="Mol. Gen. Genet.">
        <title>An isoamylase with neutral pH optimum from a Flavobacterium species: cloning, characterization and expression of the iam gene.</title>
        <authorList>
            <person name="Krohn B.M."/>
            <person name="Barry G.F."/>
            <person name="Kishore G.M."/>
        </authorList>
    </citation>
    <scope>NUCLEOTIDE SEQUENCE [GENOMIC DNA]</scope>
</reference>
<organism>
    <name type="scientific">Flavobacterium sp</name>
    <dbReference type="NCBI Taxonomy" id="239"/>
    <lineage>
        <taxon>Bacteria</taxon>
        <taxon>Pseudomonadati</taxon>
        <taxon>Bacteroidota</taxon>
        <taxon>Flavobacteriia</taxon>
        <taxon>Flavobacteriales</taxon>
        <taxon>Flavobacteriaceae</taxon>
        <taxon>Flavobacterium</taxon>
    </lineage>
</organism>
<dbReference type="EC" id="3.2.1.68"/>
<dbReference type="EMBL" id="U90120">
    <property type="protein sequence ID" value="AAB63356.1"/>
    <property type="molecule type" value="Genomic_DNA"/>
</dbReference>
<dbReference type="SMR" id="O32611"/>
<dbReference type="CAZy" id="CBM48">
    <property type="family name" value="Carbohydrate-Binding Module Family 48"/>
</dbReference>
<dbReference type="CAZy" id="GH13">
    <property type="family name" value="Glycoside Hydrolase Family 13"/>
</dbReference>
<dbReference type="GO" id="GO:0019156">
    <property type="term" value="F:isoamylase activity"/>
    <property type="evidence" value="ECO:0007669"/>
    <property type="project" value="UniProtKB-EC"/>
</dbReference>
<dbReference type="GO" id="GO:0046872">
    <property type="term" value="F:metal ion binding"/>
    <property type="evidence" value="ECO:0007669"/>
    <property type="project" value="UniProtKB-KW"/>
</dbReference>
<dbReference type="GO" id="GO:0005975">
    <property type="term" value="P:carbohydrate metabolic process"/>
    <property type="evidence" value="ECO:0007669"/>
    <property type="project" value="InterPro"/>
</dbReference>
<dbReference type="CDD" id="cd11326">
    <property type="entry name" value="AmyAc_Glg_debranch"/>
    <property type="match status" value="1"/>
</dbReference>
<dbReference type="CDD" id="cd02856">
    <property type="entry name" value="E_set_GDE_Isoamylase_N"/>
    <property type="match status" value="1"/>
</dbReference>
<dbReference type="Gene3D" id="3.20.20.80">
    <property type="entry name" value="Glycosidases"/>
    <property type="match status" value="1"/>
</dbReference>
<dbReference type="Gene3D" id="2.60.40.1180">
    <property type="entry name" value="Golgi alpha-mannosidase II"/>
    <property type="match status" value="1"/>
</dbReference>
<dbReference type="Gene3D" id="2.60.40.10">
    <property type="entry name" value="Immunoglobulins"/>
    <property type="match status" value="1"/>
</dbReference>
<dbReference type="InterPro" id="IPR044505">
    <property type="entry name" value="GlgX_Isoamylase_N_E_set"/>
</dbReference>
<dbReference type="InterPro" id="IPR006047">
    <property type="entry name" value="Glyco_hydro_13_cat_dom"/>
</dbReference>
<dbReference type="InterPro" id="IPR004193">
    <property type="entry name" value="Glyco_hydro_13_N"/>
</dbReference>
<dbReference type="InterPro" id="IPR013780">
    <property type="entry name" value="Glyco_hydro_b"/>
</dbReference>
<dbReference type="InterPro" id="IPR017853">
    <property type="entry name" value="Glycoside_hydrolase_SF"/>
</dbReference>
<dbReference type="InterPro" id="IPR013783">
    <property type="entry name" value="Ig-like_fold"/>
</dbReference>
<dbReference type="InterPro" id="IPR014756">
    <property type="entry name" value="Ig_E-set"/>
</dbReference>
<dbReference type="InterPro" id="IPR048644">
    <property type="entry name" value="Isoamylase_C"/>
</dbReference>
<dbReference type="PANTHER" id="PTHR43002">
    <property type="entry name" value="GLYCOGEN DEBRANCHING ENZYME"/>
    <property type="match status" value="1"/>
</dbReference>
<dbReference type="Pfam" id="PF00128">
    <property type="entry name" value="Alpha-amylase"/>
    <property type="match status" value="1"/>
</dbReference>
<dbReference type="Pfam" id="PF02922">
    <property type="entry name" value="CBM_48"/>
    <property type="match status" value="1"/>
</dbReference>
<dbReference type="Pfam" id="PF21331">
    <property type="entry name" value="Isoamylase_C"/>
    <property type="match status" value="1"/>
</dbReference>
<dbReference type="SMART" id="SM00642">
    <property type="entry name" value="Aamy"/>
    <property type="match status" value="1"/>
</dbReference>
<dbReference type="SUPFAM" id="SSF51445">
    <property type="entry name" value="(Trans)glycosidases"/>
    <property type="match status" value="1"/>
</dbReference>
<dbReference type="SUPFAM" id="SSF81296">
    <property type="entry name" value="E set domains"/>
    <property type="match status" value="1"/>
</dbReference>
<dbReference type="SUPFAM" id="SSF51011">
    <property type="entry name" value="Glycosyl hydrolase domain"/>
    <property type="match status" value="1"/>
</dbReference>
<proteinExistence type="evidence at protein level"/>
<sequence>MDPHAPQRQRSGQRLRALALAALACALSPAHAAIDAQQLGARYDAAQANLAFRVYSSRATRVEVFLYKNPTGSQEVARLALSKDPATQVWSLSLPTSTIKNTYGITGAVYYGYRAWGPNWPYDAAWTKGSATGFVSDVDNAGNRFNPNKLLLDPYAREISQDPNTATCADGTIYATGAAHRNKDSGLCASKGIALAADATSVGSKPTRALKDEVIYEVHVRGLTRNDDSVPAAERGTYKGAARKAAALAALGVTAVEFLPVQETQNDQNDVDPNSTAGDNYWGYMTLNYFAPDRRYAYDKSAGGPTREWKAMVKAFHDAGIKVYIDVVYNHTGEGGPWSGTDGLSVYNLLSFRGLDNPAYYSLSSDYKYPWDNTGVGGNYNTRHPIAQNLIVDSLAYWRDALGVDGFRFDLASVLGNSCQHGCFNFDKNDSGNALNRIVAELPPRPAAGGAGADLIAEPWAIGGNSYQVGGFPAGWAEWNGLYRDALRKKQNKLGVETVTPGTLATRFAGSNDLYGDDGRKPWHSINFVVAHDGFTLNDLYAYNDKQNNQPWPYGPSDGGEDHNLSWNQGGIVAEQRKAARTGLALLMLSAGVPMITGGDEALRTQFGNNNTYNLDSAANWLYWSRSALEADHETYTKRLIAFRKAHPALRPANFYSASDTNGNVMEQLRWFKPDGAQADSAYFNGADNHALAWRIDGSEFGDSASAIYVAYNGWSGAVDFKLPWPGTGKQWYRVTDTATWNEGPNAVALPGSETLIGGENTVYGMQARSLLLLIAK</sequence>
<gene>
    <name type="primary">iam</name>
</gene>